<evidence type="ECO:0000250" key="1"/>
<evidence type="ECO:0000255" key="2"/>
<evidence type="ECO:0000256" key="3">
    <source>
        <dbReference type="SAM" id="MobiDB-lite"/>
    </source>
</evidence>
<evidence type="ECO:0000269" key="4">
    <source>
    </source>
</evidence>
<evidence type="ECO:0000269" key="5">
    <source>
    </source>
</evidence>
<evidence type="ECO:0000305" key="6"/>
<proteinExistence type="evidence at protein level"/>
<gene>
    <name type="primary">PGA32</name>
    <name type="ordered locus">CAALFM_C307160WA</name>
    <name type="ORF">CaO19.14076</name>
    <name type="ORF">CaO19.6784</name>
</gene>
<protein>
    <recommendedName>
        <fullName>Probable GPI-anchored adhesin-like protein PGA32</fullName>
    </recommendedName>
    <alternativeName>
        <fullName>Predicted GPI-anchored protein 32</fullName>
    </alternativeName>
</protein>
<reference key="1">
    <citation type="journal article" date="2004" name="Proc. Natl. Acad. Sci. U.S.A.">
        <title>The diploid genome sequence of Candida albicans.</title>
        <authorList>
            <person name="Jones T."/>
            <person name="Federspiel N.A."/>
            <person name="Chibana H."/>
            <person name="Dungan J."/>
            <person name="Kalman S."/>
            <person name="Magee B.B."/>
            <person name="Newport G."/>
            <person name="Thorstenson Y.R."/>
            <person name="Agabian N."/>
            <person name="Magee P.T."/>
            <person name="Davis R.W."/>
            <person name="Scherer S."/>
        </authorList>
    </citation>
    <scope>NUCLEOTIDE SEQUENCE [LARGE SCALE GENOMIC DNA]</scope>
    <source>
        <strain>SC5314 / ATCC MYA-2876</strain>
    </source>
</reference>
<reference key="2">
    <citation type="journal article" date="2007" name="Genome Biol.">
        <title>Assembly of the Candida albicans genome into sixteen supercontigs aligned on the eight chromosomes.</title>
        <authorList>
            <person name="van het Hoog M."/>
            <person name="Rast T.J."/>
            <person name="Martchenko M."/>
            <person name="Grindle S."/>
            <person name="Dignard D."/>
            <person name="Hogues H."/>
            <person name="Cuomo C."/>
            <person name="Berriman M."/>
            <person name="Scherer S."/>
            <person name="Magee B.B."/>
            <person name="Whiteway M."/>
            <person name="Chibana H."/>
            <person name="Nantel A."/>
            <person name="Magee P.T."/>
        </authorList>
    </citation>
    <scope>GENOME REANNOTATION</scope>
    <source>
        <strain>SC5314 / ATCC MYA-2876</strain>
    </source>
</reference>
<reference key="3">
    <citation type="journal article" date="2013" name="Genome Biol.">
        <title>Assembly of a phased diploid Candida albicans genome facilitates allele-specific measurements and provides a simple model for repeat and indel structure.</title>
        <authorList>
            <person name="Muzzey D."/>
            <person name="Schwartz K."/>
            <person name="Weissman J.S."/>
            <person name="Sherlock G."/>
        </authorList>
    </citation>
    <scope>NUCLEOTIDE SEQUENCE [LARGE SCALE GENOMIC DNA]</scope>
    <scope>GENOME REANNOTATION</scope>
    <source>
        <strain>SC5314 / ATCC MYA-2876</strain>
    </source>
</reference>
<reference key="4">
    <citation type="journal article" date="2003" name="Yeast">
        <title>Genome-wide identification of fungal GPI proteins.</title>
        <authorList>
            <person name="De Groot P.W."/>
            <person name="Hellingwerf K.J."/>
            <person name="Klis F.M."/>
        </authorList>
    </citation>
    <scope>PREDICTION OF GPI-ANCHOR</scope>
</reference>
<reference key="5">
    <citation type="journal article" date="2004" name="Mol. Microbiol.">
        <title>Regulatory networks affected by iron availability in Candida albicans.</title>
        <authorList>
            <person name="Lan C.Y."/>
            <person name="Rodarte G."/>
            <person name="Murillo L.A."/>
            <person name="Jones T."/>
            <person name="Davis R.W."/>
            <person name="Dungan J."/>
            <person name="Newport G."/>
            <person name="Agabian N."/>
        </authorList>
    </citation>
    <scope>INDUCTION</scope>
</reference>
<reference key="6">
    <citation type="journal article" date="2011" name="BMC Genomics">
        <title>FungalRV: adhesin prediction and immunoinformatics portal for human fungal pathogens.</title>
        <authorList>
            <person name="Chaudhuri R."/>
            <person name="Ansari F.A."/>
            <person name="Raghunandanan M.V."/>
            <person name="Ramachandran S."/>
        </authorList>
    </citation>
    <scope>FUNCTION</scope>
</reference>
<name>PGA32_CANAL</name>
<accession>Q5ADQ7</accession>
<accession>A0A1D8PKP5</accession>
<comment type="function">
    <text evidence="1 5">Putative adhesin which is involved in cell adhesion and virulence.</text>
</comment>
<comment type="subcellular location">
    <subcellularLocation>
        <location evidence="6">Cell membrane</location>
        <topology evidence="6">Lipid-anchor</topology>
        <topology evidence="6">GPI-anchor</topology>
    </subcellularLocation>
</comment>
<comment type="induction">
    <text evidence="4">Induced upon high iron conditions.</text>
</comment>
<organism>
    <name type="scientific">Candida albicans (strain SC5314 / ATCC MYA-2876)</name>
    <name type="common">Yeast</name>
    <dbReference type="NCBI Taxonomy" id="237561"/>
    <lineage>
        <taxon>Eukaryota</taxon>
        <taxon>Fungi</taxon>
        <taxon>Dikarya</taxon>
        <taxon>Ascomycota</taxon>
        <taxon>Saccharomycotina</taxon>
        <taxon>Pichiomycetes</taxon>
        <taxon>Debaryomycetaceae</taxon>
        <taxon>Candida/Lodderomyces clade</taxon>
        <taxon>Candida</taxon>
    </lineage>
</organism>
<feature type="signal peptide" evidence="2">
    <location>
        <begin position="1"/>
        <end position="16"/>
    </location>
</feature>
<feature type="chain" id="PRO_0000424933" description="Probable GPI-anchored adhesin-like protein PGA32">
    <location>
        <begin position="17"/>
        <end position="401"/>
    </location>
</feature>
<feature type="propeptide" id="PRO_0000424934" description="Removed in mature form" evidence="2">
    <location>
        <begin position="402"/>
        <end position="430"/>
    </location>
</feature>
<feature type="region of interest" description="Disordered" evidence="3">
    <location>
        <begin position="88"/>
        <end position="195"/>
    </location>
</feature>
<feature type="region of interest" description="Disordered" evidence="3">
    <location>
        <begin position="232"/>
        <end position="257"/>
    </location>
</feature>
<feature type="region of interest" description="Disordered" evidence="3">
    <location>
        <begin position="278"/>
        <end position="302"/>
    </location>
</feature>
<feature type="region of interest" description="Disordered" evidence="3">
    <location>
        <begin position="314"/>
        <end position="336"/>
    </location>
</feature>
<feature type="compositionally biased region" description="Low complexity" evidence="3">
    <location>
        <begin position="92"/>
        <end position="112"/>
    </location>
</feature>
<feature type="compositionally biased region" description="Low complexity" evidence="3">
    <location>
        <begin position="122"/>
        <end position="135"/>
    </location>
</feature>
<feature type="compositionally biased region" description="Polar residues" evidence="3">
    <location>
        <begin position="141"/>
        <end position="167"/>
    </location>
</feature>
<feature type="compositionally biased region" description="Low complexity" evidence="3">
    <location>
        <begin position="168"/>
        <end position="187"/>
    </location>
</feature>
<feature type="compositionally biased region" description="Low complexity" evidence="3">
    <location>
        <begin position="233"/>
        <end position="253"/>
    </location>
</feature>
<feature type="compositionally biased region" description="Polar residues" evidence="3">
    <location>
        <begin position="289"/>
        <end position="302"/>
    </location>
</feature>
<feature type="compositionally biased region" description="Low complexity" evidence="3">
    <location>
        <begin position="314"/>
        <end position="335"/>
    </location>
</feature>
<feature type="lipid moiety-binding region" description="GPI-anchor amidated glycine" evidence="2">
    <location>
        <position position="401"/>
    </location>
</feature>
<dbReference type="EMBL" id="CP017625">
    <property type="protein sequence ID" value="AOW28719.1"/>
    <property type="molecule type" value="Genomic_DNA"/>
</dbReference>
<dbReference type="RefSeq" id="XP_719880.1">
    <property type="nucleotide sequence ID" value="XM_714787.1"/>
</dbReference>
<dbReference type="STRING" id="237561.Q5ADQ7"/>
<dbReference type="EnsemblFungi" id="C3_07160W_A-T">
    <property type="protein sequence ID" value="C3_07160W_A-T-p1"/>
    <property type="gene ID" value="C3_07160W_A"/>
</dbReference>
<dbReference type="GeneID" id="3638537"/>
<dbReference type="KEGG" id="cal:CAALFM_C307160WA"/>
<dbReference type="CGD" id="CAL0000193137">
    <property type="gene designation" value="PGA32"/>
</dbReference>
<dbReference type="VEuPathDB" id="FungiDB:C3_07160W_A"/>
<dbReference type="HOGENOM" id="CLU_591823_0_0_1"/>
<dbReference type="InParanoid" id="Q5ADQ7"/>
<dbReference type="OMA" id="TTENTFW"/>
<dbReference type="OrthoDB" id="4025024at2759"/>
<dbReference type="PRO" id="PR:Q5ADQ7"/>
<dbReference type="Proteomes" id="UP000000559">
    <property type="component" value="Chromosome 3"/>
</dbReference>
<dbReference type="GO" id="GO:0005886">
    <property type="term" value="C:plasma membrane"/>
    <property type="evidence" value="ECO:0007669"/>
    <property type="project" value="UniProtKB-SubCell"/>
</dbReference>
<dbReference type="GO" id="GO:0098552">
    <property type="term" value="C:side of membrane"/>
    <property type="evidence" value="ECO:0007669"/>
    <property type="project" value="UniProtKB-KW"/>
</dbReference>
<dbReference type="GO" id="GO:0007155">
    <property type="term" value="P:cell adhesion"/>
    <property type="evidence" value="ECO:0007669"/>
    <property type="project" value="UniProtKB-KW"/>
</dbReference>
<keyword id="KW-0130">Cell adhesion</keyword>
<keyword id="KW-1003">Cell membrane</keyword>
<keyword id="KW-0325">Glycoprotein</keyword>
<keyword id="KW-0336">GPI-anchor</keyword>
<keyword id="KW-0449">Lipoprotein</keyword>
<keyword id="KW-0472">Membrane</keyword>
<keyword id="KW-1185">Reference proteome</keyword>
<keyword id="KW-0732">Signal</keyword>
<keyword id="KW-0843">Virulence</keyword>
<sequence length="430" mass="43529">MKVSTLIIVSIPIVSGLQIKDTVGTTTENTFWYQLFGTPSRSQPAAVAATAAGTEVQGFTPISTSSSSSSSSAAPWYQGLFGVGRTTLGQVTTPSRTSTTTTTSNPIAPTTSIANSNNLFGTDTAPTTTTTTNARSRSRSTPVTVSGDNVLTLFGNPNLSTGNDQSNSVSKTTAETTTTSSAPSSSSRVQPTVINGGGSDGVLTLFGNSEALSNFDSTTVVDSDSTARITPIASASASSGSSTKDNDSDSSSARGIKSIPNSSEFLASLINGLGSGGGGNGSGSNTNSYKNHSTTSTTSKYFNSSSTATKLSSSKSIYSNSTTSRSSLSVSSSSTDGGGGANLFGSLLNSVAAVSRTLAAESTLSTGTTTTSDSANSNTKDYSSYSGTITSFPSTTGSLSGDGNKLIGGNKYLISFMWTNLILTMIMLFT</sequence>